<reference key="1">
    <citation type="journal article" date="1996" name="DNA Res.">
        <title>Sequence analysis of the genome of the unicellular cyanobacterium Synechocystis sp. strain PCC6803. II. Sequence determination of the entire genome and assignment of potential protein-coding regions.</title>
        <authorList>
            <person name="Kaneko T."/>
            <person name="Sato S."/>
            <person name="Kotani H."/>
            <person name="Tanaka A."/>
            <person name="Asamizu E."/>
            <person name="Nakamura Y."/>
            <person name="Miyajima N."/>
            <person name="Hirosawa M."/>
            <person name="Sugiura M."/>
            <person name="Sasamoto S."/>
            <person name="Kimura T."/>
            <person name="Hosouchi T."/>
            <person name="Matsuno A."/>
            <person name="Muraki A."/>
            <person name="Nakazaki N."/>
            <person name="Naruo K."/>
            <person name="Okumura S."/>
            <person name="Shimpo S."/>
            <person name="Takeuchi C."/>
            <person name="Wada T."/>
            <person name="Watanabe A."/>
            <person name="Yamada M."/>
            <person name="Yasuda M."/>
            <person name="Tabata S."/>
        </authorList>
    </citation>
    <scope>NUCLEOTIDE SEQUENCE [LARGE SCALE GENOMIC DNA]</scope>
    <source>
        <strain>ATCC 27184 / PCC 6803 / Kazusa</strain>
    </source>
</reference>
<name>TRMD_SYNY3</name>
<keyword id="KW-0963">Cytoplasm</keyword>
<keyword id="KW-0489">Methyltransferase</keyword>
<keyword id="KW-1185">Reference proteome</keyword>
<keyword id="KW-0949">S-adenosyl-L-methionine</keyword>
<keyword id="KW-0808">Transferase</keyword>
<keyword id="KW-0819">tRNA processing</keyword>
<accession>P72828</accession>
<dbReference type="EC" id="2.1.1.228"/>
<dbReference type="EMBL" id="BA000022">
    <property type="protein sequence ID" value="BAA16843.1"/>
    <property type="molecule type" value="Genomic_DNA"/>
</dbReference>
<dbReference type="PIR" id="S74692">
    <property type="entry name" value="S74692"/>
</dbReference>
<dbReference type="SMR" id="P72828"/>
<dbReference type="FunCoup" id="P72828">
    <property type="interactions" value="391"/>
</dbReference>
<dbReference type="IntAct" id="P72828">
    <property type="interactions" value="1"/>
</dbReference>
<dbReference type="STRING" id="1148.gene:10497701"/>
<dbReference type="PaxDb" id="1148-1651917"/>
<dbReference type="EnsemblBacteria" id="BAA16843">
    <property type="protein sequence ID" value="BAA16843"/>
    <property type="gene ID" value="BAA16843"/>
</dbReference>
<dbReference type="KEGG" id="syn:sll1198"/>
<dbReference type="eggNOG" id="COG0336">
    <property type="taxonomic scope" value="Bacteria"/>
</dbReference>
<dbReference type="InParanoid" id="P72828"/>
<dbReference type="PhylomeDB" id="P72828"/>
<dbReference type="Proteomes" id="UP000001425">
    <property type="component" value="Chromosome"/>
</dbReference>
<dbReference type="GO" id="GO:0005829">
    <property type="term" value="C:cytosol"/>
    <property type="evidence" value="ECO:0000318"/>
    <property type="project" value="GO_Central"/>
</dbReference>
<dbReference type="GO" id="GO:0052906">
    <property type="term" value="F:tRNA (guanine(37)-N1)-methyltransferase activity"/>
    <property type="evidence" value="ECO:0000318"/>
    <property type="project" value="GO_Central"/>
</dbReference>
<dbReference type="GO" id="GO:0002939">
    <property type="term" value="P:tRNA N1-guanine methylation"/>
    <property type="evidence" value="ECO:0000318"/>
    <property type="project" value="GO_Central"/>
</dbReference>
<dbReference type="CDD" id="cd18080">
    <property type="entry name" value="TrmD-like"/>
    <property type="match status" value="1"/>
</dbReference>
<dbReference type="FunFam" id="1.10.1270.20:FF:000001">
    <property type="entry name" value="tRNA (guanine-N(1)-)-methyltransferase"/>
    <property type="match status" value="1"/>
</dbReference>
<dbReference type="FunFam" id="3.40.1280.10:FF:000001">
    <property type="entry name" value="tRNA (guanine-N(1)-)-methyltransferase"/>
    <property type="match status" value="1"/>
</dbReference>
<dbReference type="Gene3D" id="3.40.1280.10">
    <property type="match status" value="1"/>
</dbReference>
<dbReference type="Gene3D" id="1.10.1270.20">
    <property type="entry name" value="tRNA(m1g37)methyltransferase, domain 2"/>
    <property type="match status" value="1"/>
</dbReference>
<dbReference type="HAMAP" id="MF_00605">
    <property type="entry name" value="TrmD"/>
    <property type="match status" value="1"/>
</dbReference>
<dbReference type="InterPro" id="IPR029028">
    <property type="entry name" value="Alpha/beta_knot_MTases"/>
</dbReference>
<dbReference type="InterPro" id="IPR023148">
    <property type="entry name" value="tRNA_m1G_MeTrfase_C_sf"/>
</dbReference>
<dbReference type="InterPro" id="IPR002649">
    <property type="entry name" value="tRNA_m1G_MeTrfase_TrmD"/>
</dbReference>
<dbReference type="InterPro" id="IPR029026">
    <property type="entry name" value="tRNA_m1G_MTases_N"/>
</dbReference>
<dbReference type="InterPro" id="IPR016009">
    <property type="entry name" value="tRNA_MeTrfase_TRMD/TRM10"/>
</dbReference>
<dbReference type="NCBIfam" id="NF000648">
    <property type="entry name" value="PRK00026.1"/>
    <property type="match status" value="1"/>
</dbReference>
<dbReference type="NCBIfam" id="TIGR00088">
    <property type="entry name" value="trmD"/>
    <property type="match status" value="1"/>
</dbReference>
<dbReference type="PANTHER" id="PTHR46417">
    <property type="entry name" value="TRNA (GUANINE-N(1)-)-METHYLTRANSFERASE"/>
    <property type="match status" value="1"/>
</dbReference>
<dbReference type="PANTHER" id="PTHR46417:SF1">
    <property type="entry name" value="TRNA (GUANINE-N(1)-)-METHYLTRANSFERASE"/>
    <property type="match status" value="1"/>
</dbReference>
<dbReference type="Pfam" id="PF01746">
    <property type="entry name" value="tRNA_m1G_MT"/>
    <property type="match status" value="1"/>
</dbReference>
<dbReference type="PIRSF" id="PIRSF000386">
    <property type="entry name" value="tRNA_mtase"/>
    <property type="match status" value="1"/>
</dbReference>
<dbReference type="SUPFAM" id="SSF75217">
    <property type="entry name" value="alpha/beta knot"/>
    <property type="match status" value="1"/>
</dbReference>
<comment type="function">
    <text evidence="1">Specifically methylates guanosine-37 in various tRNAs.</text>
</comment>
<comment type="catalytic activity">
    <reaction>
        <text>guanosine(37) in tRNA + S-adenosyl-L-methionine = N(1)-methylguanosine(37) in tRNA + S-adenosyl-L-homocysteine + H(+)</text>
        <dbReference type="Rhea" id="RHEA:36899"/>
        <dbReference type="Rhea" id="RHEA-COMP:10145"/>
        <dbReference type="Rhea" id="RHEA-COMP:10147"/>
        <dbReference type="ChEBI" id="CHEBI:15378"/>
        <dbReference type="ChEBI" id="CHEBI:57856"/>
        <dbReference type="ChEBI" id="CHEBI:59789"/>
        <dbReference type="ChEBI" id="CHEBI:73542"/>
        <dbReference type="ChEBI" id="CHEBI:74269"/>
        <dbReference type="EC" id="2.1.1.228"/>
    </reaction>
</comment>
<comment type="subunit">
    <text evidence="1">Homodimer.</text>
</comment>
<comment type="subcellular location">
    <subcellularLocation>
        <location evidence="3">Cytoplasm</location>
    </subcellularLocation>
</comment>
<comment type="similarity">
    <text evidence="3">Belongs to the RNA methyltransferase TrmD family.</text>
</comment>
<gene>
    <name type="primary">trmD</name>
    <name type="ordered locus">sll1198</name>
</gene>
<protein>
    <recommendedName>
        <fullName>tRNA (guanine-N(1)-)-methyltransferase</fullName>
        <ecNumber>2.1.1.228</ecNumber>
    </recommendedName>
    <alternativeName>
        <fullName>M1G-methyltransferase</fullName>
    </alternativeName>
    <alternativeName>
        <fullName>tRNA [GM37] methyltransferase</fullName>
    </alternativeName>
</protein>
<organism>
    <name type="scientific">Synechocystis sp. (strain ATCC 27184 / PCC 6803 / Kazusa)</name>
    <dbReference type="NCBI Taxonomy" id="1111708"/>
    <lineage>
        <taxon>Bacteria</taxon>
        <taxon>Bacillati</taxon>
        <taxon>Cyanobacteriota</taxon>
        <taxon>Cyanophyceae</taxon>
        <taxon>Synechococcales</taxon>
        <taxon>Merismopediaceae</taxon>
        <taxon>Synechocystis</taxon>
    </lineage>
</organism>
<feature type="chain" id="PRO_0000060482" description="tRNA (guanine-N(1)-)-methyltransferase">
    <location>
        <begin position="1"/>
        <end position="231"/>
    </location>
</feature>
<feature type="region of interest" description="Disordered" evidence="2">
    <location>
        <begin position="210"/>
        <end position="231"/>
    </location>
</feature>
<feature type="binding site" evidence="1">
    <location>
        <position position="111"/>
    </location>
    <ligand>
        <name>S-adenosyl-L-methionine</name>
        <dbReference type="ChEBI" id="CHEBI:59789"/>
    </ligand>
</feature>
<feature type="binding site" evidence="1">
    <location>
        <begin position="130"/>
        <end position="135"/>
    </location>
    <ligand>
        <name>S-adenosyl-L-methionine</name>
        <dbReference type="ChEBI" id="CHEBI:59789"/>
    </ligand>
</feature>
<evidence type="ECO:0000250" key="1"/>
<evidence type="ECO:0000256" key="2">
    <source>
        <dbReference type="SAM" id="MobiDB-lite"/>
    </source>
</evidence>
<evidence type="ECO:0000305" key="3"/>
<sequence>MQFDVLTLFPDFFTSPLQSGLLGKALEKAIASVNLINPRDFTTDKHRRVDDEPYGGGVGMVIKPEPIFAAVESLPVLSKREVILMTPQGQPMDQALFRELTNYDQLVLICGHYEGVDERVCQLVTREVSLGDFVLTCGEIPALTLINGVIRLLPGTVGKEASLIAESFSTDLLDYPHYTRPPVFRGLAVPPVLLSGNHQAIAQWRLEQQEERTQQRRPDLWQKWQDRQPSP</sequence>
<proteinExistence type="inferred from homology"/>